<keyword id="KW-1185">Reference proteome</keyword>
<name>YDET_ECOLI</name>
<sequence>MSGYTVKPPTGDTNEQTQFIDYFNLFYSKRGQEQISISQQLGNYGTTFFSASRQSYWNTSRSDQQISFGLNVPFGDITTSLNYSYSNNIWQNDRDHLLAFTLNVPFSHWMRTDSQSAFRNSNASYSMSNDLKGGMTNLSGVYGTLLPDNNLNYSVQVGNTHGGNTSSGTSGYSSLNYRGAYGNTNVGYSRSGDSSQIYYGMSGGIIAHADGITFGQPLGDTMVLVKAPGADNVKIENQTGIHTDWRGYAILPFATEYRENRVALNANSLADNVELDETVVTVIPTHGAIARATFNAQIGGKVLMTLKYGNKSVPFGAIVTHGENKNGSIVAENGQVYLTGLPQSGQLQVSWGKDKNSNCIVEYKLPEVSPGTLLNQQTAICR</sequence>
<proteinExistence type="predicted"/>
<accession>P76137</accession>
<accession>A0A385XJH7</accession>
<accession>Q79EJ5</accession>
<evidence type="ECO:0000269" key="1">
    <source>
    </source>
</evidence>
<reference key="1">
    <citation type="journal article" date="1997" name="Science">
        <title>The complete genome sequence of Escherichia coli K-12.</title>
        <authorList>
            <person name="Blattner F.R."/>
            <person name="Plunkett G. III"/>
            <person name="Bloch C.A."/>
            <person name="Perna N.T."/>
            <person name="Burland V."/>
            <person name="Riley M."/>
            <person name="Collado-Vides J."/>
            <person name="Glasner J.D."/>
            <person name="Rode C.K."/>
            <person name="Mayhew G.F."/>
            <person name="Gregor J."/>
            <person name="Davis N.W."/>
            <person name="Kirkpatrick H.A."/>
            <person name="Goeden M.A."/>
            <person name="Rose D.J."/>
            <person name="Mau B."/>
            <person name="Shao Y."/>
        </authorList>
    </citation>
    <scope>NUCLEOTIDE SEQUENCE [LARGE SCALE GENOMIC DNA]</scope>
    <source>
        <strain>K12 / MG1655 / ATCC 47076</strain>
    </source>
</reference>
<reference key="2">
    <citation type="journal article" date="2006" name="Mol. Syst. Biol.">
        <title>Highly accurate genome sequences of Escherichia coli K-12 strains MG1655 and W3110.</title>
        <authorList>
            <person name="Hayashi K."/>
            <person name="Morooka N."/>
            <person name="Yamamoto Y."/>
            <person name="Fujita K."/>
            <person name="Isono K."/>
            <person name="Choi S."/>
            <person name="Ohtsubo E."/>
            <person name="Baba T."/>
            <person name="Wanner B.L."/>
            <person name="Mori H."/>
            <person name="Horiuchi T."/>
        </authorList>
    </citation>
    <scope>NUCLEOTIDE SEQUENCE [LARGE SCALE GENOMIC DNA]</scope>
    <source>
        <strain>K12 / W3110 / ATCC 27325 / DSM 5911</strain>
    </source>
</reference>
<reference key="3">
    <citation type="journal article" date="2015" name="Bioinformatics">
        <title>Novel function discovery with GeneMANIA: a new integrated resource for gene function prediction in Escherichia coli.</title>
        <authorList>
            <person name="Vlasblom J."/>
            <person name="Zuberi K."/>
            <person name="Rodriguez H."/>
            <person name="Arnold R."/>
            <person name="Gagarinova A."/>
            <person name="Deineko V."/>
            <person name="Kumar A."/>
            <person name="Leung E."/>
            <person name="Rizzolo K."/>
            <person name="Samanfar B."/>
            <person name="Chang L."/>
            <person name="Phanse S."/>
            <person name="Golshani A."/>
            <person name="Greenblatt J.F."/>
            <person name="Houry W.A."/>
            <person name="Emili A."/>
            <person name="Morris Q."/>
            <person name="Bader G."/>
            <person name="Babu M."/>
        </authorList>
    </citation>
    <scope>DISRUPTION PHENOTYPE</scope>
    <source>
        <strain>K12 / BW25113</strain>
    </source>
</reference>
<protein>
    <recommendedName>
        <fullName>Fimbrial usher domain-containing protein YdeT</fullName>
    </recommendedName>
</protein>
<organism>
    <name type="scientific">Escherichia coli (strain K12)</name>
    <dbReference type="NCBI Taxonomy" id="83333"/>
    <lineage>
        <taxon>Bacteria</taxon>
        <taxon>Pseudomonadati</taxon>
        <taxon>Pseudomonadota</taxon>
        <taxon>Gammaproteobacteria</taxon>
        <taxon>Enterobacterales</taxon>
        <taxon>Enterobacteriaceae</taxon>
        <taxon>Escherichia</taxon>
    </lineage>
</organism>
<comment type="disruption phenotype">
    <text evidence="1">Increased biofilm formation.</text>
</comment>
<feature type="chain" id="PRO_0000252228" description="Fimbrial usher domain-containing protein YdeT">
    <location>
        <begin position="1"/>
        <end position="382"/>
    </location>
</feature>
<gene>
    <name type="primary">ydeT</name>
    <name type="ordered locus">b1505</name>
    <name type="ordered locus">JW1499</name>
</gene>
<dbReference type="EMBL" id="U00096">
    <property type="protein sequence ID" value="AYC08213.1"/>
    <property type="molecule type" value="Genomic_DNA"/>
</dbReference>
<dbReference type="EMBL" id="AP009048">
    <property type="protein sequence ID" value="BAA15178.2"/>
    <property type="molecule type" value="Genomic_DNA"/>
</dbReference>
<dbReference type="PIR" id="D64904">
    <property type="entry name" value="D64904"/>
</dbReference>
<dbReference type="SMR" id="P76137"/>
<dbReference type="BioGRID" id="4260204">
    <property type="interactions" value="262"/>
</dbReference>
<dbReference type="FunCoup" id="P76137">
    <property type="interactions" value="237"/>
</dbReference>
<dbReference type="EnsemblBacteria" id="AYC08213">
    <property type="protein sequence ID" value="AYC08213"/>
    <property type="gene ID" value="b1505"/>
</dbReference>
<dbReference type="KEGG" id="ecj:JW1499"/>
<dbReference type="PATRIC" id="fig|83333.103.peg.2335"/>
<dbReference type="eggNOG" id="COG3188">
    <property type="taxonomic scope" value="Bacteria"/>
</dbReference>
<dbReference type="HOGENOM" id="CLU_009120_4_0_6"/>
<dbReference type="InParanoid" id="P76137"/>
<dbReference type="PhylomeDB" id="P76137"/>
<dbReference type="BioCyc" id="EcoCyc:G6795-MONOMER"/>
<dbReference type="PRO" id="PR:P76137"/>
<dbReference type="Proteomes" id="UP000000625">
    <property type="component" value="Chromosome"/>
</dbReference>
<dbReference type="GO" id="GO:0009279">
    <property type="term" value="C:cell outer membrane"/>
    <property type="evidence" value="ECO:0000318"/>
    <property type="project" value="GO_Central"/>
</dbReference>
<dbReference type="GO" id="GO:0015473">
    <property type="term" value="F:fimbrial usher porin activity"/>
    <property type="evidence" value="ECO:0000318"/>
    <property type="project" value="GO_Central"/>
</dbReference>
<dbReference type="GO" id="GO:0009297">
    <property type="term" value="P:pilus assembly"/>
    <property type="evidence" value="ECO:0000318"/>
    <property type="project" value="GO_Central"/>
</dbReference>
<dbReference type="FunFam" id="2.60.40.2610:FF:000001">
    <property type="entry name" value="Outer membrane fimbrial usher protein"/>
    <property type="match status" value="1"/>
</dbReference>
<dbReference type="Gene3D" id="2.60.40.2070">
    <property type="match status" value="1"/>
</dbReference>
<dbReference type="Gene3D" id="2.60.40.2610">
    <property type="entry name" value="Outer membrane usher protein FimD, plug domain"/>
    <property type="match status" value="1"/>
</dbReference>
<dbReference type="InterPro" id="IPR000015">
    <property type="entry name" value="Fimb_usher"/>
</dbReference>
<dbReference type="InterPro" id="IPR042186">
    <property type="entry name" value="FimD_plug_dom"/>
</dbReference>
<dbReference type="InterPro" id="IPR025949">
    <property type="entry name" value="PapC-like_C"/>
</dbReference>
<dbReference type="InterPro" id="IPR043142">
    <property type="entry name" value="PapC-like_C_sf"/>
</dbReference>
<dbReference type="PANTHER" id="PTHR30451:SF21">
    <property type="entry name" value="FIMBRIAL USHER DOMAIN-CONTAINING PROTEIN YDET-RELATED"/>
    <property type="match status" value="1"/>
</dbReference>
<dbReference type="PANTHER" id="PTHR30451">
    <property type="entry name" value="OUTER MEMBRANE USHER PROTEIN"/>
    <property type="match status" value="1"/>
</dbReference>
<dbReference type="Pfam" id="PF13953">
    <property type="entry name" value="PapC_C"/>
    <property type="match status" value="1"/>
</dbReference>
<dbReference type="Pfam" id="PF00577">
    <property type="entry name" value="Usher"/>
    <property type="match status" value="1"/>
</dbReference>